<accession>Q54L54</accession>
<dbReference type="EC" id="3.6.4.-" evidence="2"/>
<dbReference type="EMBL" id="AAFI02000091">
    <property type="protein sequence ID" value="EAL64004.1"/>
    <property type="molecule type" value="Genomic_DNA"/>
</dbReference>
<dbReference type="RefSeq" id="XP_637509.1">
    <property type="nucleotide sequence ID" value="XM_632417.1"/>
</dbReference>
<dbReference type="SMR" id="Q54L54"/>
<dbReference type="FunCoup" id="Q54L54">
    <property type="interactions" value="8"/>
</dbReference>
<dbReference type="STRING" id="44689.Q54L54"/>
<dbReference type="PaxDb" id="44689-DDB0229355"/>
<dbReference type="EnsemblProtists" id="EAL64004">
    <property type="protein sequence ID" value="EAL64004"/>
    <property type="gene ID" value="DDB_G0286893"/>
</dbReference>
<dbReference type="GeneID" id="8625848"/>
<dbReference type="KEGG" id="ddi:DDB_G0286893"/>
<dbReference type="dictyBase" id="DDB_G0286893">
    <property type="gene designation" value="act29"/>
</dbReference>
<dbReference type="VEuPathDB" id="AmoebaDB:DDB_G0286893"/>
<dbReference type="eggNOG" id="KOG0676">
    <property type="taxonomic scope" value="Eukaryota"/>
</dbReference>
<dbReference type="HOGENOM" id="CLU_027965_0_2_1"/>
<dbReference type="InParanoid" id="Q54L54"/>
<dbReference type="PhylomeDB" id="Q54L54"/>
<dbReference type="PRO" id="PR:Q54L54"/>
<dbReference type="Proteomes" id="UP000002195">
    <property type="component" value="Chromosome 4"/>
</dbReference>
<dbReference type="GO" id="GO:0015629">
    <property type="term" value="C:actin cytoskeleton"/>
    <property type="evidence" value="ECO:0000250"/>
    <property type="project" value="dictyBase"/>
</dbReference>
<dbReference type="GO" id="GO:0005737">
    <property type="term" value="C:cytoplasm"/>
    <property type="evidence" value="ECO:0007669"/>
    <property type="project" value="UniProtKB-KW"/>
</dbReference>
<dbReference type="GO" id="GO:0005524">
    <property type="term" value="F:ATP binding"/>
    <property type="evidence" value="ECO:0007669"/>
    <property type="project" value="UniProtKB-KW"/>
</dbReference>
<dbReference type="GO" id="GO:0016787">
    <property type="term" value="F:hydrolase activity"/>
    <property type="evidence" value="ECO:0007669"/>
    <property type="project" value="UniProtKB-KW"/>
</dbReference>
<dbReference type="GO" id="GO:0017022">
    <property type="term" value="F:myosin binding"/>
    <property type="evidence" value="ECO:0000250"/>
    <property type="project" value="dictyBase"/>
</dbReference>
<dbReference type="GO" id="GO:0005200">
    <property type="term" value="F:structural constituent of cytoskeleton"/>
    <property type="evidence" value="ECO:0000250"/>
    <property type="project" value="dictyBase"/>
</dbReference>
<dbReference type="GO" id="GO:0006909">
    <property type="term" value="P:phagocytosis"/>
    <property type="evidence" value="ECO:0000250"/>
    <property type="project" value="dictyBase"/>
</dbReference>
<dbReference type="FunFam" id="3.90.640.10:FF:000007">
    <property type="entry name" value="Actin like 7B"/>
    <property type="match status" value="1"/>
</dbReference>
<dbReference type="FunFam" id="3.30.420.40:FF:000148">
    <property type="entry name" value="Actin, alpha skeletal muscle"/>
    <property type="match status" value="1"/>
</dbReference>
<dbReference type="FunFam" id="3.30.420.40:FF:000058">
    <property type="entry name" value="Putative actin-related protein 5"/>
    <property type="match status" value="1"/>
</dbReference>
<dbReference type="Gene3D" id="3.30.420.40">
    <property type="match status" value="2"/>
</dbReference>
<dbReference type="Gene3D" id="3.90.640.10">
    <property type="entry name" value="Actin, Chain A, domain 4"/>
    <property type="match status" value="1"/>
</dbReference>
<dbReference type="InterPro" id="IPR004000">
    <property type="entry name" value="Actin"/>
</dbReference>
<dbReference type="InterPro" id="IPR043129">
    <property type="entry name" value="ATPase_NBD"/>
</dbReference>
<dbReference type="PANTHER" id="PTHR11937">
    <property type="entry name" value="ACTIN"/>
    <property type="match status" value="1"/>
</dbReference>
<dbReference type="Pfam" id="PF00022">
    <property type="entry name" value="Actin"/>
    <property type="match status" value="1"/>
</dbReference>
<dbReference type="PRINTS" id="PR00190">
    <property type="entry name" value="ACTIN"/>
</dbReference>
<dbReference type="SMART" id="SM00268">
    <property type="entry name" value="ACTIN"/>
    <property type="match status" value="1"/>
</dbReference>
<dbReference type="SUPFAM" id="SSF53067">
    <property type="entry name" value="Actin-like ATPase domain"/>
    <property type="match status" value="2"/>
</dbReference>
<name>ACT29_DICDI</name>
<organism>
    <name type="scientific">Dictyostelium discoideum</name>
    <name type="common">Social amoeba</name>
    <dbReference type="NCBI Taxonomy" id="44689"/>
    <lineage>
        <taxon>Eukaryota</taxon>
        <taxon>Amoebozoa</taxon>
        <taxon>Evosea</taxon>
        <taxon>Eumycetozoa</taxon>
        <taxon>Dictyostelia</taxon>
        <taxon>Dictyosteliales</taxon>
        <taxon>Dictyosteliaceae</taxon>
        <taxon>Dictyostelium</taxon>
    </lineage>
</organism>
<reference key="1">
    <citation type="journal article" date="2005" name="Nature">
        <title>The genome of the social amoeba Dictyostelium discoideum.</title>
        <authorList>
            <person name="Eichinger L."/>
            <person name="Pachebat J.A."/>
            <person name="Gloeckner G."/>
            <person name="Rajandream M.A."/>
            <person name="Sucgang R."/>
            <person name="Berriman M."/>
            <person name="Song J."/>
            <person name="Olsen R."/>
            <person name="Szafranski K."/>
            <person name="Xu Q."/>
            <person name="Tunggal B."/>
            <person name="Kummerfeld S."/>
            <person name="Madera M."/>
            <person name="Konfortov B.A."/>
            <person name="Rivero F."/>
            <person name="Bankier A.T."/>
            <person name="Lehmann R."/>
            <person name="Hamlin N."/>
            <person name="Davies R."/>
            <person name="Gaudet P."/>
            <person name="Fey P."/>
            <person name="Pilcher K."/>
            <person name="Chen G."/>
            <person name="Saunders D."/>
            <person name="Sodergren E.J."/>
            <person name="Davis P."/>
            <person name="Kerhornou A."/>
            <person name="Nie X."/>
            <person name="Hall N."/>
            <person name="Anjard C."/>
            <person name="Hemphill L."/>
            <person name="Bason N."/>
            <person name="Farbrother P."/>
            <person name="Desany B."/>
            <person name="Just E."/>
            <person name="Morio T."/>
            <person name="Rost R."/>
            <person name="Churcher C.M."/>
            <person name="Cooper J."/>
            <person name="Haydock S."/>
            <person name="van Driessche N."/>
            <person name="Cronin A."/>
            <person name="Goodhead I."/>
            <person name="Muzny D.M."/>
            <person name="Mourier T."/>
            <person name="Pain A."/>
            <person name="Lu M."/>
            <person name="Harper D."/>
            <person name="Lindsay R."/>
            <person name="Hauser H."/>
            <person name="James K.D."/>
            <person name="Quiles M."/>
            <person name="Madan Babu M."/>
            <person name="Saito T."/>
            <person name="Buchrieser C."/>
            <person name="Wardroper A."/>
            <person name="Felder M."/>
            <person name="Thangavelu M."/>
            <person name="Johnson D."/>
            <person name="Knights A."/>
            <person name="Loulseged H."/>
            <person name="Mungall K.L."/>
            <person name="Oliver K."/>
            <person name="Price C."/>
            <person name="Quail M.A."/>
            <person name="Urushihara H."/>
            <person name="Hernandez J."/>
            <person name="Rabbinowitsch E."/>
            <person name="Steffen D."/>
            <person name="Sanders M."/>
            <person name="Ma J."/>
            <person name="Kohara Y."/>
            <person name="Sharp S."/>
            <person name="Simmonds M.N."/>
            <person name="Spiegler S."/>
            <person name="Tivey A."/>
            <person name="Sugano S."/>
            <person name="White B."/>
            <person name="Walker D."/>
            <person name="Woodward J.R."/>
            <person name="Winckler T."/>
            <person name="Tanaka Y."/>
            <person name="Shaulsky G."/>
            <person name="Schleicher M."/>
            <person name="Weinstock G.M."/>
            <person name="Rosenthal A."/>
            <person name="Cox E.C."/>
            <person name="Chisholm R.L."/>
            <person name="Gibbs R.A."/>
            <person name="Loomis W.F."/>
            <person name="Platzer M."/>
            <person name="Kay R.R."/>
            <person name="Williams J.G."/>
            <person name="Dear P.H."/>
            <person name="Noegel A.A."/>
            <person name="Barrell B.G."/>
            <person name="Kuspa A."/>
        </authorList>
    </citation>
    <scope>NUCLEOTIDE SEQUENCE [LARGE SCALE GENOMIC DNA]</scope>
    <source>
        <strain>AX4</strain>
    </source>
</reference>
<evidence type="ECO:0000250" key="1"/>
<evidence type="ECO:0000250" key="2">
    <source>
        <dbReference type="UniProtKB" id="P68137"/>
    </source>
</evidence>
<evidence type="ECO:0000305" key="3"/>
<gene>
    <name type="primary">act29</name>
    <name type="ORF">DDB_G0286893</name>
</gene>
<feature type="chain" id="PRO_0000312679" description="Putative actin-29">
    <location>
        <begin position="1"/>
        <end position="387"/>
    </location>
</feature>
<sequence length="387" mass="43825">MNLNDDDDNYNSAIVIDNGSYLCKAGFGGEESPRAIFRSVVGRPNFCTRGVKNGMGQKDCYVGDEAIVKKSILSLKCPNESKSPVNWDDIEKILHHVFYNELRVTIDKGVLLSEIPLNPKENRERITQIMFETFDTPNFYLANQSVLSLYSKGRLNGIVLDSGNNITYTVPIYEGHSIPNSINQLEIAGNSVTEYLMKILNENRGYNFTTSSEKEIVKDIKEKFGFISLNYNNDLYSTKVATNEIEKSYQLPDGQMITIGKERFICGEVLFEPSLVNIESYGVHQLLYNSIINCDFEIRRGLYNNIILSGGTTMLPDFNDRIKNELINLSPSSMKIKVVENNTNENNSHLAWIGGSIFSSLSTFEQQSISKQEYMEYGSKIIQRKCF</sequence>
<protein>
    <recommendedName>
        <fullName>Putative actin-29</fullName>
        <ecNumber evidence="2">3.6.4.-</ecNumber>
    </recommendedName>
</protein>
<keyword id="KW-0067">ATP-binding</keyword>
<keyword id="KW-0963">Cytoplasm</keyword>
<keyword id="KW-0206">Cytoskeleton</keyword>
<keyword id="KW-0378">Hydrolase</keyword>
<keyword id="KW-0547">Nucleotide-binding</keyword>
<keyword id="KW-1185">Reference proteome</keyword>
<proteinExistence type="inferred from homology"/>
<comment type="function">
    <text evidence="1">Actins are highly conserved proteins that are involved in various types of cell motility and are ubiquitously expressed in all eukaryotic cells. Multiple isoforms are involved in various cellular functions such as cytoskeleton structure, cell mobility, chromosome movement and muscle contraction (By similarity).</text>
</comment>
<comment type="catalytic activity">
    <reaction evidence="2">
        <text>ATP + H2O = ADP + phosphate + H(+)</text>
        <dbReference type="Rhea" id="RHEA:13065"/>
        <dbReference type="ChEBI" id="CHEBI:15377"/>
        <dbReference type="ChEBI" id="CHEBI:15378"/>
        <dbReference type="ChEBI" id="CHEBI:30616"/>
        <dbReference type="ChEBI" id="CHEBI:43474"/>
        <dbReference type="ChEBI" id="CHEBI:456216"/>
    </reaction>
</comment>
<comment type="subcellular location">
    <subcellularLocation>
        <location evidence="1">Cytoplasm</location>
        <location evidence="1">Cytoskeleton</location>
    </subcellularLocation>
</comment>
<comment type="similarity">
    <text evidence="3">Belongs to the actin family.</text>
</comment>